<reference key="1">
    <citation type="journal article" date="2007" name="Science">
        <title>Legumes symbioses: absence of nod genes in photosynthetic bradyrhizobia.</title>
        <authorList>
            <person name="Giraud E."/>
            <person name="Moulin L."/>
            <person name="Vallenet D."/>
            <person name="Barbe V."/>
            <person name="Cytryn E."/>
            <person name="Avarre J.-C."/>
            <person name="Jaubert M."/>
            <person name="Simon D."/>
            <person name="Cartieaux F."/>
            <person name="Prin Y."/>
            <person name="Bena G."/>
            <person name="Hannibal L."/>
            <person name="Fardoux J."/>
            <person name="Kojadinovic M."/>
            <person name="Vuillet L."/>
            <person name="Lajus A."/>
            <person name="Cruveiller S."/>
            <person name="Rouy Z."/>
            <person name="Mangenot S."/>
            <person name="Segurens B."/>
            <person name="Dossat C."/>
            <person name="Franck W.L."/>
            <person name="Chang W.-S."/>
            <person name="Saunders E."/>
            <person name="Bruce D."/>
            <person name="Richardson P."/>
            <person name="Normand P."/>
            <person name="Dreyfus B."/>
            <person name="Pignol D."/>
            <person name="Stacey G."/>
            <person name="Emerich D."/>
            <person name="Vermeglio A."/>
            <person name="Medigue C."/>
            <person name="Sadowsky M."/>
        </authorList>
    </citation>
    <scope>NUCLEOTIDE SEQUENCE [LARGE SCALE GENOMIC DNA]</scope>
    <source>
        <strain>ORS 278</strain>
    </source>
</reference>
<proteinExistence type="inferred from homology"/>
<gene>
    <name type="ordered locus">BRADO0254</name>
</gene>
<sequence>MVERLSAEARASALRDLSGWAELDGREAISRTFTFRDFNEAFGFMTRVALIAEKRDHHPEWRNVYRTVEVVLATHDAGGVTMLDIELARAMDAIAAAISG</sequence>
<evidence type="ECO:0000255" key="1">
    <source>
        <dbReference type="HAMAP-Rule" id="MF_00434"/>
    </source>
</evidence>
<dbReference type="EC" id="4.2.1.96" evidence="1"/>
<dbReference type="EMBL" id="CU234118">
    <property type="protein sequence ID" value="CAL74214.1"/>
    <property type="molecule type" value="Genomic_DNA"/>
</dbReference>
<dbReference type="SMR" id="A4YJY8"/>
<dbReference type="STRING" id="114615.BRADO0254"/>
<dbReference type="KEGG" id="bra:BRADO0254"/>
<dbReference type="eggNOG" id="COG2154">
    <property type="taxonomic scope" value="Bacteria"/>
</dbReference>
<dbReference type="HOGENOM" id="CLU_081974_3_2_5"/>
<dbReference type="OrthoDB" id="9794987at2"/>
<dbReference type="Proteomes" id="UP000001994">
    <property type="component" value="Chromosome"/>
</dbReference>
<dbReference type="GO" id="GO:0008124">
    <property type="term" value="F:4-alpha-hydroxytetrahydrobiopterin dehydratase activity"/>
    <property type="evidence" value="ECO:0007669"/>
    <property type="project" value="UniProtKB-UniRule"/>
</dbReference>
<dbReference type="GO" id="GO:0006729">
    <property type="term" value="P:tetrahydrobiopterin biosynthetic process"/>
    <property type="evidence" value="ECO:0007669"/>
    <property type="project" value="InterPro"/>
</dbReference>
<dbReference type="CDD" id="cd00914">
    <property type="entry name" value="PCD_DCoH_subfamily_b"/>
    <property type="match status" value="1"/>
</dbReference>
<dbReference type="Gene3D" id="3.30.1360.20">
    <property type="entry name" value="Transcriptional coactivator/pterin dehydratase"/>
    <property type="match status" value="1"/>
</dbReference>
<dbReference type="HAMAP" id="MF_00434">
    <property type="entry name" value="Pterin_4_alpha"/>
    <property type="match status" value="1"/>
</dbReference>
<dbReference type="InterPro" id="IPR036428">
    <property type="entry name" value="PCD_sf"/>
</dbReference>
<dbReference type="InterPro" id="IPR001533">
    <property type="entry name" value="Pterin_deHydtase"/>
</dbReference>
<dbReference type="NCBIfam" id="NF002017">
    <property type="entry name" value="PRK00823.1-2"/>
    <property type="match status" value="1"/>
</dbReference>
<dbReference type="NCBIfam" id="NF002018">
    <property type="entry name" value="PRK00823.1-3"/>
    <property type="match status" value="1"/>
</dbReference>
<dbReference type="PANTHER" id="PTHR12599">
    <property type="entry name" value="PTERIN-4-ALPHA-CARBINOLAMINE DEHYDRATASE"/>
    <property type="match status" value="1"/>
</dbReference>
<dbReference type="PANTHER" id="PTHR12599:SF0">
    <property type="entry name" value="PTERIN-4-ALPHA-CARBINOLAMINE DEHYDRATASE"/>
    <property type="match status" value="1"/>
</dbReference>
<dbReference type="Pfam" id="PF01329">
    <property type="entry name" value="Pterin_4a"/>
    <property type="match status" value="1"/>
</dbReference>
<dbReference type="SUPFAM" id="SSF55248">
    <property type="entry name" value="PCD-like"/>
    <property type="match status" value="1"/>
</dbReference>
<keyword id="KW-0456">Lyase</keyword>
<keyword id="KW-1185">Reference proteome</keyword>
<accession>A4YJY8</accession>
<feature type="chain" id="PRO_1000050408" description="Putative pterin-4-alpha-carbinolamine dehydratase">
    <location>
        <begin position="1"/>
        <end position="100"/>
    </location>
</feature>
<name>PHS_BRASO</name>
<organism>
    <name type="scientific">Bradyrhizobium sp. (strain ORS 278)</name>
    <dbReference type="NCBI Taxonomy" id="114615"/>
    <lineage>
        <taxon>Bacteria</taxon>
        <taxon>Pseudomonadati</taxon>
        <taxon>Pseudomonadota</taxon>
        <taxon>Alphaproteobacteria</taxon>
        <taxon>Hyphomicrobiales</taxon>
        <taxon>Nitrobacteraceae</taxon>
        <taxon>Bradyrhizobium</taxon>
    </lineage>
</organism>
<comment type="catalytic activity">
    <reaction evidence="1">
        <text>(4aS,6R)-4a-hydroxy-L-erythro-5,6,7,8-tetrahydrobiopterin = (6R)-L-erythro-6,7-dihydrobiopterin + H2O</text>
        <dbReference type="Rhea" id="RHEA:11920"/>
        <dbReference type="ChEBI" id="CHEBI:15377"/>
        <dbReference type="ChEBI" id="CHEBI:15642"/>
        <dbReference type="ChEBI" id="CHEBI:43120"/>
        <dbReference type="EC" id="4.2.1.96"/>
    </reaction>
</comment>
<comment type="similarity">
    <text evidence="1">Belongs to the pterin-4-alpha-carbinolamine dehydratase family.</text>
</comment>
<protein>
    <recommendedName>
        <fullName evidence="1">Putative pterin-4-alpha-carbinolamine dehydratase</fullName>
        <shortName evidence="1">PHS</shortName>
        <ecNumber evidence="1">4.2.1.96</ecNumber>
    </recommendedName>
    <alternativeName>
        <fullName evidence="1">4-alpha-hydroxy-tetrahydropterin dehydratase</fullName>
    </alternativeName>
    <alternativeName>
        <fullName evidence="1">Pterin carbinolamine dehydratase</fullName>
        <shortName evidence="1">PCD</shortName>
    </alternativeName>
</protein>